<dbReference type="EMBL" id="AL009126">
    <property type="protein sequence ID" value="CAB13285.1"/>
    <property type="molecule type" value="Genomic_DNA"/>
</dbReference>
<dbReference type="PIR" id="C69871">
    <property type="entry name" value="C69871"/>
</dbReference>
<dbReference type="RefSeq" id="WP_010886502.1">
    <property type="nucleotide sequence ID" value="NZ_OZ025638.1"/>
</dbReference>
<dbReference type="PDB" id="2LZF">
    <property type="method" value="NMR"/>
    <property type="chains" value="A/B=1-65"/>
</dbReference>
<dbReference type="PDBsum" id="2LZF"/>
<dbReference type="BMRB" id="O31697"/>
<dbReference type="SMR" id="O31697"/>
<dbReference type="DIP" id="DIP-46305N"/>
<dbReference type="FunCoup" id="O31697">
    <property type="interactions" value="8"/>
</dbReference>
<dbReference type="IntAct" id="O31697">
    <property type="interactions" value="1"/>
</dbReference>
<dbReference type="STRING" id="224308.BSU14120"/>
<dbReference type="PaxDb" id="224308-BSU14120"/>
<dbReference type="EnsemblBacteria" id="CAB13285">
    <property type="protein sequence ID" value="CAB13285"/>
    <property type="gene ID" value="BSU_14120"/>
</dbReference>
<dbReference type="GeneID" id="76986523"/>
<dbReference type="GeneID" id="939703"/>
<dbReference type="KEGG" id="bsu:BSU14120"/>
<dbReference type="PATRIC" id="fig|224308.43.peg.1498"/>
<dbReference type="eggNOG" id="ENOG502ZT80">
    <property type="taxonomic scope" value="Bacteria"/>
</dbReference>
<dbReference type="InParanoid" id="O31697"/>
<dbReference type="OrthoDB" id="2886079at2"/>
<dbReference type="BioCyc" id="BSUB:BSU14120-MONOMER"/>
<dbReference type="EvolutionaryTrace" id="O31697"/>
<dbReference type="Proteomes" id="UP000001570">
    <property type="component" value="Chromosome"/>
</dbReference>
<dbReference type="Gene3D" id="1.10.287.3030">
    <property type="match status" value="1"/>
</dbReference>
<dbReference type="InterPro" id="IPR025446">
    <property type="entry name" value="Antirep_AbbA"/>
</dbReference>
<dbReference type="Pfam" id="PF14156">
    <property type="entry name" value="AbbA_antirepres"/>
    <property type="match status" value="1"/>
</dbReference>
<sequence length="65" mass="7698">MRMSLIGERFTEEEQKLLLNILINHEYAIELLSSEINDIETGTKNVDGTTYKKLVTLYDRFRFEN</sequence>
<accession>O31697</accession>
<gene>
    <name type="primary">ykzF</name>
    <name type="ordered locus">BSU14120</name>
</gene>
<feature type="chain" id="PRO_0000049617" description="Uncharacterized protein YkzF">
    <location>
        <begin position="1"/>
        <end position="65"/>
    </location>
</feature>
<feature type="turn" evidence="1">
    <location>
        <begin position="11"/>
        <end position="14"/>
    </location>
</feature>
<feature type="helix" evidence="1">
    <location>
        <begin position="15"/>
        <end position="22"/>
    </location>
</feature>
<feature type="strand" evidence="1">
    <location>
        <begin position="23"/>
        <end position="25"/>
    </location>
</feature>
<feature type="helix" evidence="1">
    <location>
        <begin position="28"/>
        <end position="40"/>
    </location>
</feature>
<feature type="helix" evidence="1">
    <location>
        <begin position="49"/>
        <end position="61"/>
    </location>
</feature>
<feature type="turn" evidence="1">
    <location>
        <begin position="62"/>
        <end position="64"/>
    </location>
</feature>
<protein>
    <recommendedName>
        <fullName>Uncharacterized protein YkzF</fullName>
    </recommendedName>
</protein>
<evidence type="ECO:0007829" key="1">
    <source>
        <dbReference type="PDB" id="2LZF"/>
    </source>
</evidence>
<name>YKZF_BACSU</name>
<organism>
    <name type="scientific">Bacillus subtilis (strain 168)</name>
    <dbReference type="NCBI Taxonomy" id="224308"/>
    <lineage>
        <taxon>Bacteria</taxon>
        <taxon>Bacillati</taxon>
        <taxon>Bacillota</taxon>
        <taxon>Bacilli</taxon>
        <taxon>Bacillales</taxon>
        <taxon>Bacillaceae</taxon>
        <taxon>Bacillus</taxon>
    </lineage>
</organism>
<reference key="1">
    <citation type="journal article" date="1997" name="Nature">
        <title>The complete genome sequence of the Gram-positive bacterium Bacillus subtilis.</title>
        <authorList>
            <person name="Kunst F."/>
            <person name="Ogasawara N."/>
            <person name="Moszer I."/>
            <person name="Albertini A.M."/>
            <person name="Alloni G."/>
            <person name="Azevedo V."/>
            <person name="Bertero M.G."/>
            <person name="Bessieres P."/>
            <person name="Bolotin A."/>
            <person name="Borchert S."/>
            <person name="Borriss R."/>
            <person name="Boursier L."/>
            <person name="Brans A."/>
            <person name="Braun M."/>
            <person name="Brignell S.C."/>
            <person name="Bron S."/>
            <person name="Brouillet S."/>
            <person name="Bruschi C.V."/>
            <person name="Caldwell B."/>
            <person name="Capuano V."/>
            <person name="Carter N.M."/>
            <person name="Choi S.-K."/>
            <person name="Codani J.-J."/>
            <person name="Connerton I.F."/>
            <person name="Cummings N.J."/>
            <person name="Daniel R.A."/>
            <person name="Denizot F."/>
            <person name="Devine K.M."/>
            <person name="Duesterhoeft A."/>
            <person name="Ehrlich S.D."/>
            <person name="Emmerson P.T."/>
            <person name="Entian K.-D."/>
            <person name="Errington J."/>
            <person name="Fabret C."/>
            <person name="Ferrari E."/>
            <person name="Foulger D."/>
            <person name="Fritz C."/>
            <person name="Fujita M."/>
            <person name="Fujita Y."/>
            <person name="Fuma S."/>
            <person name="Galizzi A."/>
            <person name="Galleron N."/>
            <person name="Ghim S.-Y."/>
            <person name="Glaser P."/>
            <person name="Goffeau A."/>
            <person name="Golightly E.J."/>
            <person name="Grandi G."/>
            <person name="Guiseppi G."/>
            <person name="Guy B.J."/>
            <person name="Haga K."/>
            <person name="Haiech J."/>
            <person name="Harwood C.R."/>
            <person name="Henaut A."/>
            <person name="Hilbert H."/>
            <person name="Holsappel S."/>
            <person name="Hosono S."/>
            <person name="Hullo M.-F."/>
            <person name="Itaya M."/>
            <person name="Jones L.-M."/>
            <person name="Joris B."/>
            <person name="Karamata D."/>
            <person name="Kasahara Y."/>
            <person name="Klaerr-Blanchard M."/>
            <person name="Klein C."/>
            <person name="Kobayashi Y."/>
            <person name="Koetter P."/>
            <person name="Koningstein G."/>
            <person name="Krogh S."/>
            <person name="Kumano M."/>
            <person name="Kurita K."/>
            <person name="Lapidus A."/>
            <person name="Lardinois S."/>
            <person name="Lauber J."/>
            <person name="Lazarevic V."/>
            <person name="Lee S.-M."/>
            <person name="Levine A."/>
            <person name="Liu H."/>
            <person name="Masuda S."/>
            <person name="Mauel C."/>
            <person name="Medigue C."/>
            <person name="Medina N."/>
            <person name="Mellado R.P."/>
            <person name="Mizuno M."/>
            <person name="Moestl D."/>
            <person name="Nakai S."/>
            <person name="Noback M."/>
            <person name="Noone D."/>
            <person name="O'Reilly M."/>
            <person name="Ogawa K."/>
            <person name="Ogiwara A."/>
            <person name="Oudega B."/>
            <person name="Park S.-H."/>
            <person name="Parro V."/>
            <person name="Pohl T.M."/>
            <person name="Portetelle D."/>
            <person name="Porwollik S."/>
            <person name="Prescott A.M."/>
            <person name="Presecan E."/>
            <person name="Pujic P."/>
            <person name="Purnelle B."/>
            <person name="Rapoport G."/>
            <person name="Rey M."/>
            <person name="Reynolds S."/>
            <person name="Rieger M."/>
            <person name="Rivolta C."/>
            <person name="Rocha E."/>
            <person name="Roche B."/>
            <person name="Rose M."/>
            <person name="Sadaie Y."/>
            <person name="Sato T."/>
            <person name="Scanlan E."/>
            <person name="Schleich S."/>
            <person name="Schroeter R."/>
            <person name="Scoffone F."/>
            <person name="Sekiguchi J."/>
            <person name="Sekowska A."/>
            <person name="Seror S.J."/>
            <person name="Serror P."/>
            <person name="Shin B.-S."/>
            <person name="Soldo B."/>
            <person name="Sorokin A."/>
            <person name="Tacconi E."/>
            <person name="Takagi T."/>
            <person name="Takahashi H."/>
            <person name="Takemaru K."/>
            <person name="Takeuchi M."/>
            <person name="Tamakoshi A."/>
            <person name="Tanaka T."/>
            <person name="Terpstra P."/>
            <person name="Tognoni A."/>
            <person name="Tosato V."/>
            <person name="Uchiyama S."/>
            <person name="Vandenbol M."/>
            <person name="Vannier F."/>
            <person name="Vassarotti A."/>
            <person name="Viari A."/>
            <person name="Wambutt R."/>
            <person name="Wedler E."/>
            <person name="Wedler H."/>
            <person name="Weitzenegger T."/>
            <person name="Winters P."/>
            <person name="Wipat A."/>
            <person name="Yamamoto H."/>
            <person name="Yamane K."/>
            <person name="Yasumoto K."/>
            <person name="Yata K."/>
            <person name="Yoshida K."/>
            <person name="Yoshikawa H.-F."/>
            <person name="Zumstein E."/>
            <person name="Yoshikawa H."/>
            <person name="Danchin A."/>
        </authorList>
    </citation>
    <scope>NUCLEOTIDE SEQUENCE [LARGE SCALE GENOMIC DNA]</scope>
    <source>
        <strain>168</strain>
    </source>
</reference>
<keyword id="KW-0002">3D-structure</keyword>
<keyword id="KW-1185">Reference proteome</keyword>
<comment type="interaction">
    <interactant intactId="EBI-15732529">
        <id>O31697</id>
    </interactant>
    <interactant intactId="EBI-2121787">
        <id>P08874</id>
        <label>abrB</label>
    </interactant>
    <organismsDiffer>false</organismsDiffer>
    <experiments>2</experiments>
</comment>
<proteinExistence type="evidence at protein level"/>